<protein>
    <recommendedName>
        <fullName>RING-H2 finger protein ATL11</fullName>
        <ecNumber evidence="5">2.3.2.27</ecNumber>
    </recommendedName>
    <alternativeName>
        <fullName evidence="5">RING-type E3 ubiquitin transferase ATL11</fullName>
    </alternativeName>
</protein>
<sequence>MNPKGRTNLNRSIIGGHDHGSILQLLLFLLLLSSHGGFKFVAGQATHGGSDVSGDSSRFDPTMAILMIVLVSVFFFLGFFSVYIRRCLERVMGMDYGNPNDAGNWLATNRQQARGLDASIIETFPTFQYSTVKTLRIGKEALECSVCLNEFEDDETLRLIPKCCHVFHPGCIDAWLRSHTTCPLCRADLIPVPGESIVSIQIPGLVNDPPGSDPNGDRIRSLGSPDARLIESVALTCNQSMPRRSMSTGWNLAGMFTNSDRTGQHSENLDRFTLRLPQDIHNKLVNPNLSKVHVALPQVMSSTRGYRTGSLGSERNYFYYERFDQDGRLDRRPFSITPPYRTSSINHMSPGGSGGDKVRASSPKSLLLAMRSPFDRLFLGKNNNVGENSSDHLRSCDATPSNTV</sequence>
<name>ATL11_ARATH</name>
<accession>Q84W40</accession>
<accession>Q9C7T5</accession>
<feature type="signal peptide" evidence="2">
    <location>
        <begin position="1"/>
        <end position="36"/>
    </location>
</feature>
<feature type="chain" id="PRO_0000030704" description="RING-H2 finger protein ATL11">
    <location>
        <begin position="37"/>
        <end position="404"/>
    </location>
</feature>
<feature type="transmembrane region" description="Helical" evidence="2">
    <location>
        <begin position="64"/>
        <end position="84"/>
    </location>
</feature>
<feature type="zinc finger region" description="RING-type; atypical" evidence="3">
    <location>
        <begin position="144"/>
        <end position="186"/>
    </location>
</feature>
<feature type="region of interest" description="Disordered" evidence="4">
    <location>
        <begin position="339"/>
        <end position="361"/>
    </location>
</feature>
<feature type="region of interest" description="Disordered" evidence="4">
    <location>
        <begin position="385"/>
        <end position="404"/>
    </location>
</feature>
<feature type="sequence conflict" description="In Ref. 3; AAO42269." evidence="5" ref="3">
    <original>D</original>
    <variation>G</variation>
    <location>
        <position position="324"/>
    </location>
</feature>
<gene>
    <name type="primary">ATL11</name>
    <name type="ordered locus">At1g72200</name>
    <name type="ORF">T9N14.11</name>
</gene>
<keyword id="KW-0472">Membrane</keyword>
<keyword id="KW-0479">Metal-binding</keyword>
<keyword id="KW-1185">Reference proteome</keyword>
<keyword id="KW-0732">Signal</keyword>
<keyword id="KW-0808">Transferase</keyword>
<keyword id="KW-0812">Transmembrane</keyword>
<keyword id="KW-1133">Transmembrane helix</keyword>
<keyword id="KW-0833">Ubl conjugation pathway</keyword>
<keyword id="KW-0862">Zinc</keyword>
<keyword id="KW-0863">Zinc-finger</keyword>
<evidence type="ECO:0000250" key="1"/>
<evidence type="ECO:0000255" key="2"/>
<evidence type="ECO:0000255" key="3">
    <source>
        <dbReference type="PROSITE-ProRule" id="PRU00175"/>
    </source>
</evidence>
<evidence type="ECO:0000256" key="4">
    <source>
        <dbReference type="SAM" id="MobiDB-lite"/>
    </source>
</evidence>
<evidence type="ECO:0000305" key="5"/>
<organism>
    <name type="scientific">Arabidopsis thaliana</name>
    <name type="common">Mouse-ear cress</name>
    <dbReference type="NCBI Taxonomy" id="3702"/>
    <lineage>
        <taxon>Eukaryota</taxon>
        <taxon>Viridiplantae</taxon>
        <taxon>Streptophyta</taxon>
        <taxon>Embryophyta</taxon>
        <taxon>Tracheophyta</taxon>
        <taxon>Spermatophyta</taxon>
        <taxon>Magnoliopsida</taxon>
        <taxon>eudicotyledons</taxon>
        <taxon>Gunneridae</taxon>
        <taxon>Pentapetalae</taxon>
        <taxon>rosids</taxon>
        <taxon>malvids</taxon>
        <taxon>Brassicales</taxon>
        <taxon>Brassicaceae</taxon>
        <taxon>Camelineae</taxon>
        <taxon>Arabidopsis</taxon>
    </lineage>
</organism>
<reference key="1">
    <citation type="journal article" date="2000" name="Nature">
        <title>Sequence and analysis of chromosome 1 of the plant Arabidopsis thaliana.</title>
        <authorList>
            <person name="Theologis A."/>
            <person name="Ecker J.R."/>
            <person name="Palm C.J."/>
            <person name="Federspiel N.A."/>
            <person name="Kaul S."/>
            <person name="White O."/>
            <person name="Alonso J."/>
            <person name="Altafi H."/>
            <person name="Araujo R."/>
            <person name="Bowman C.L."/>
            <person name="Brooks S.Y."/>
            <person name="Buehler E."/>
            <person name="Chan A."/>
            <person name="Chao Q."/>
            <person name="Chen H."/>
            <person name="Cheuk R.F."/>
            <person name="Chin C.W."/>
            <person name="Chung M.K."/>
            <person name="Conn L."/>
            <person name="Conway A.B."/>
            <person name="Conway A.R."/>
            <person name="Creasy T.H."/>
            <person name="Dewar K."/>
            <person name="Dunn P."/>
            <person name="Etgu P."/>
            <person name="Feldblyum T.V."/>
            <person name="Feng J.-D."/>
            <person name="Fong B."/>
            <person name="Fujii C.Y."/>
            <person name="Gill J.E."/>
            <person name="Goldsmith A.D."/>
            <person name="Haas B."/>
            <person name="Hansen N.F."/>
            <person name="Hughes B."/>
            <person name="Huizar L."/>
            <person name="Hunter J.L."/>
            <person name="Jenkins J."/>
            <person name="Johnson-Hopson C."/>
            <person name="Khan S."/>
            <person name="Khaykin E."/>
            <person name="Kim C.J."/>
            <person name="Koo H.L."/>
            <person name="Kremenetskaia I."/>
            <person name="Kurtz D.B."/>
            <person name="Kwan A."/>
            <person name="Lam B."/>
            <person name="Langin-Hooper S."/>
            <person name="Lee A."/>
            <person name="Lee J.M."/>
            <person name="Lenz C.A."/>
            <person name="Li J.H."/>
            <person name="Li Y.-P."/>
            <person name="Lin X."/>
            <person name="Liu S.X."/>
            <person name="Liu Z.A."/>
            <person name="Luros J.S."/>
            <person name="Maiti R."/>
            <person name="Marziali A."/>
            <person name="Militscher J."/>
            <person name="Miranda M."/>
            <person name="Nguyen M."/>
            <person name="Nierman W.C."/>
            <person name="Osborne B.I."/>
            <person name="Pai G."/>
            <person name="Peterson J."/>
            <person name="Pham P.K."/>
            <person name="Rizzo M."/>
            <person name="Rooney T."/>
            <person name="Rowley D."/>
            <person name="Sakano H."/>
            <person name="Salzberg S.L."/>
            <person name="Schwartz J.R."/>
            <person name="Shinn P."/>
            <person name="Southwick A.M."/>
            <person name="Sun H."/>
            <person name="Tallon L.J."/>
            <person name="Tambunga G."/>
            <person name="Toriumi M.J."/>
            <person name="Town C.D."/>
            <person name="Utterback T."/>
            <person name="Van Aken S."/>
            <person name="Vaysberg M."/>
            <person name="Vysotskaia V.S."/>
            <person name="Walker M."/>
            <person name="Wu D."/>
            <person name="Yu G."/>
            <person name="Fraser C.M."/>
            <person name="Venter J.C."/>
            <person name="Davis R.W."/>
        </authorList>
    </citation>
    <scope>NUCLEOTIDE SEQUENCE [LARGE SCALE GENOMIC DNA]</scope>
    <source>
        <strain>cv. Columbia</strain>
    </source>
</reference>
<reference key="2">
    <citation type="journal article" date="2017" name="Plant J.">
        <title>Araport11: a complete reannotation of the Arabidopsis thaliana reference genome.</title>
        <authorList>
            <person name="Cheng C.Y."/>
            <person name="Krishnakumar V."/>
            <person name="Chan A.P."/>
            <person name="Thibaud-Nissen F."/>
            <person name="Schobel S."/>
            <person name="Town C.D."/>
        </authorList>
    </citation>
    <scope>GENOME REANNOTATION</scope>
    <source>
        <strain>cv. Columbia</strain>
    </source>
</reference>
<reference key="3">
    <citation type="journal article" date="2003" name="Science">
        <title>Empirical analysis of transcriptional activity in the Arabidopsis genome.</title>
        <authorList>
            <person name="Yamada K."/>
            <person name="Lim J."/>
            <person name="Dale J.M."/>
            <person name="Chen H."/>
            <person name="Shinn P."/>
            <person name="Palm C.J."/>
            <person name="Southwick A.M."/>
            <person name="Wu H.C."/>
            <person name="Kim C.J."/>
            <person name="Nguyen M."/>
            <person name="Pham P.K."/>
            <person name="Cheuk R.F."/>
            <person name="Karlin-Newmann G."/>
            <person name="Liu S.X."/>
            <person name="Lam B."/>
            <person name="Sakano H."/>
            <person name="Wu T."/>
            <person name="Yu G."/>
            <person name="Miranda M."/>
            <person name="Quach H.L."/>
            <person name="Tripp M."/>
            <person name="Chang C.H."/>
            <person name="Lee J.M."/>
            <person name="Toriumi M.J."/>
            <person name="Chan M.M."/>
            <person name="Tang C.C."/>
            <person name="Onodera C.S."/>
            <person name="Deng J.M."/>
            <person name="Akiyama K."/>
            <person name="Ansari Y."/>
            <person name="Arakawa T."/>
            <person name="Banh J."/>
            <person name="Banno F."/>
            <person name="Bowser L."/>
            <person name="Brooks S.Y."/>
            <person name="Carninci P."/>
            <person name="Chao Q."/>
            <person name="Choy N."/>
            <person name="Enju A."/>
            <person name="Goldsmith A.D."/>
            <person name="Gurjal M."/>
            <person name="Hansen N.F."/>
            <person name="Hayashizaki Y."/>
            <person name="Johnson-Hopson C."/>
            <person name="Hsuan V.W."/>
            <person name="Iida K."/>
            <person name="Karnes M."/>
            <person name="Khan S."/>
            <person name="Koesema E."/>
            <person name="Ishida J."/>
            <person name="Jiang P.X."/>
            <person name="Jones T."/>
            <person name="Kawai J."/>
            <person name="Kamiya A."/>
            <person name="Meyers C."/>
            <person name="Nakajima M."/>
            <person name="Narusaka M."/>
            <person name="Seki M."/>
            <person name="Sakurai T."/>
            <person name="Satou M."/>
            <person name="Tamse R."/>
            <person name="Vaysberg M."/>
            <person name="Wallender E.K."/>
            <person name="Wong C."/>
            <person name="Yamamura Y."/>
            <person name="Yuan S."/>
            <person name="Shinozaki K."/>
            <person name="Davis R.W."/>
            <person name="Theologis A."/>
            <person name="Ecker J.R."/>
        </authorList>
    </citation>
    <scope>NUCLEOTIDE SEQUENCE [LARGE SCALE MRNA]</scope>
    <source>
        <strain>cv. Columbia</strain>
    </source>
</reference>
<reference key="4">
    <citation type="submission" date="2005-01" db="EMBL/GenBank/DDBJ databases">
        <title>Arabidopsis ORF clones.</title>
        <authorList>
            <person name="Kim C.J."/>
            <person name="Chen H."/>
            <person name="Cheuk R.F."/>
            <person name="Shinn P."/>
            <person name="Ecker J.R."/>
        </authorList>
    </citation>
    <scope>NUCLEOTIDE SEQUENCE [LARGE SCALE MRNA]</scope>
    <source>
        <strain>cv. Columbia</strain>
    </source>
</reference>
<reference key="5">
    <citation type="journal article" date="2002" name="Genome Biol.">
        <title>Evaluation and classification of RING-finger domains encoded by the Arabidopsis genome.</title>
        <authorList>
            <person name="Kosarev P."/>
            <person name="Mayer K.F.X."/>
            <person name="Hardtke C.S."/>
        </authorList>
    </citation>
    <scope>GENE FAMILY ORGANIZATION</scope>
</reference>
<reference key="6">
    <citation type="journal article" date="2004" name="Genetics">
        <title>Isolation and gene expression analysis of Arabidopsis thaliana mutants with constitutive expression of ATL2, an early elicitor-response RING-H2 zinc-finger gene.</title>
        <authorList>
            <person name="Serrano M."/>
            <person name="Guzman P."/>
        </authorList>
    </citation>
    <scope>IDENTIFICATION</scope>
</reference>
<reference key="7">
    <citation type="journal article" date="2006" name="J. Mol. Evol.">
        <title>The ATL gene family from Arabidopsis thaliana and Oryza sativa comprises a large number of putative ubiquitin ligases of the RING-H2 type.</title>
        <authorList>
            <person name="Serrano M."/>
            <person name="Parra S."/>
            <person name="Alcaraz L.D."/>
            <person name="Guzman P."/>
        </authorList>
    </citation>
    <scope>NOMENCLATURE</scope>
    <scope>GENE FAMILY ORGANIZATION</scope>
</reference>
<dbReference type="EC" id="2.3.2.27" evidence="5"/>
<dbReference type="EMBL" id="AC067754">
    <property type="protein sequence ID" value="AAG51795.1"/>
    <property type="molecule type" value="Genomic_DNA"/>
</dbReference>
<dbReference type="EMBL" id="CP002684">
    <property type="protein sequence ID" value="AEE35288.1"/>
    <property type="molecule type" value="Genomic_DNA"/>
</dbReference>
<dbReference type="EMBL" id="BT004268">
    <property type="protein sequence ID" value="AAO42269.1"/>
    <property type="molecule type" value="mRNA"/>
</dbReference>
<dbReference type="EMBL" id="BT020487">
    <property type="protein sequence ID" value="AAW38988.1"/>
    <property type="molecule type" value="mRNA"/>
</dbReference>
<dbReference type="PIR" id="E96745">
    <property type="entry name" value="E96745"/>
</dbReference>
<dbReference type="RefSeq" id="NP_177365.1">
    <property type="nucleotide sequence ID" value="NM_105879.4"/>
</dbReference>
<dbReference type="SMR" id="Q84W40"/>
<dbReference type="BioGRID" id="28772">
    <property type="interactions" value="5"/>
</dbReference>
<dbReference type="IntAct" id="Q84W40">
    <property type="interactions" value="4"/>
</dbReference>
<dbReference type="STRING" id="3702.Q84W40"/>
<dbReference type="GlyGen" id="Q84W40">
    <property type="glycosylation" value="1 site"/>
</dbReference>
<dbReference type="iPTMnet" id="Q84W40"/>
<dbReference type="PaxDb" id="3702-AT1G72200.1"/>
<dbReference type="ProteomicsDB" id="246745"/>
<dbReference type="EnsemblPlants" id="AT1G72200.1">
    <property type="protein sequence ID" value="AT1G72200.1"/>
    <property type="gene ID" value="AT1G72200"/>
</dbReference>
<dbReference type="GeneID" id="843552"/>
<dbReference type="Gramene" id="AT1G72200.1">
    <property type="protein sequence ID" value="AT1G72200.1"/>
    <property type="gene ID" value="AT1G72200"/>
</dbReference>
<dbReference type="KEGG" id="ath:AT1G72200"/>
<dbReference type="Araport" id="AT1G72200"/>
<dbReference type="TAIR" id="AT1G72200">
    <property type="gene designation" value="ATL11"/>
</dbReference>
<dbReference type="eggNOG" id="KOG0800">
    <property type="taxonomic scope" value="Eukaryota"/>
</dbReference>
<dbReference type="HOGENOM" id="CLU_035191_1_0_1"/>
<dbReference type="InParanoid" id="Q84W40"/>
<dbReference type="OMA" id="PDRWGFT"/>
<dbReference type="PhylomeDB" id="Q84W40"/>
<dbReference type="UniPathway" id="UPA00143"/>
<dbReference type="PRO" id="PR:Q84W40"/>
<dbReference type="Proteomes" id="UP000006548">
    <property type="component" value="Chromosome 1"/>
</dbReference>
<dbReference type="ExpressionAtlas" id="Q84W40">
    <property type="expression patterns" value="baseline and differential"/>
</dbReference>
<dbReference type="GO" id="GO:0016020">
    <property type="term" value="C:membrane"/>
    <property type="evidence" value="ECO:0007669"/>
    <property type="project" value="UniProtKB-SubCell"/>
</dbReference>
<dbReference type="GO" id="GO:0016740">
    <property type="term" value="F:transferase activity"/>
    <property type="evidence" value="ECO:0007669"/>
    <property type="project" value="UniProtKB-KW"/>
</dbReference>
<dbReference type="GO" id="GO:0008270">
    <property type="term" value="F:zinc ion binding"/>
    <property type="evidence" value="ECO:0007669"/>
    <property type="project" value="UniProtKB-KW"/>
</dbReference>
<dbReference type="GO" id="GO:0016567">
    <property type="term" value="P:protein ubiquitination"/>
    <property type="evidence" value="ECO:0007669"/>
    <property type="project" value="UniProtKB-UniPathway"/>
</dbReference>
<dbReference type="CDD" id="cd16461">
    <property type="entry name" value="RING-H2_EL5-like"/>
    <property type="match status" value="1"/>
</dbReference>
<dbReference type="FunFam" id="3.30.40.10:FF:000187">
    <property type="entry name" value="E3 ubiquitin-protein ligase ATL6"/>
    <property type="match status" value="1"/>
</dbReference>
<dbReference type="Gene3D" id="3.30.40.10">
    <property type="entry name" value="Zinc/RING finger domain, C3HC4 (zinc finger)"/>
    <property type="match status" value="1"/>
</dbReference>
<dbReference type="InterPro" id="IPR053238">
    <property type="entry name" value="RING-H2_zinc_finger"/>
</dbReference>
<dbReference type="InterPro" id="IPR001841">
    <property type="entry name" value="Znf_RING"/>
</dbReference>
<dbReference type="InterPro" id="IPR013083">
    <property type="entry name" value="Znf_RING/FYVE/PHD"/>
</dbReference>
<dbReference type="PANTHER" id="PTHR14155">
    <property type="entry name" value="RING FINGER DOMAIN-CONTAINING"/>
    <property type="match status" value="1"/>
</dbReference>
<dbReference type="PANTHER" id="PTHR14155:SF590">
    <property type="entry name" value="RING-H2 FINGER PROTEIN ATL11"/>
    <property type="match status" value="1"/>
</dbReference>
<dbReference type="Pfam" id="PF13639">
    <property type="entry name" value="zf-RING_2"/>
    <property type="match status" value="1"/>
</dbReference>
<dbReference type="SMART" id="SM00184">
    <property type="entry name" value="RING"/>
    <property type="match status" value="1"/>
</dbReference>
<dbReference type="SUPFAM" id="SSF57850">
    <property type="entry name" value="RING/U-box"/>
    <property type="match status" value="1"/>
</dbReference>
<dbReference type="PROSITE" id="PS50089">
    <property type="entry name" value="ZF_RING_2"/>
    <property type="match status" value="1"/>
</dbReference>
<proteinExistence type="evidence at transcript level"/>
<comment type="catalytic activity">
    <reaction evidence="5">
        <text>S-ubiquitinyl-[E2 ubiquitin-conjugating enzyme]-L-cysteine + [acceptor protein]-L-lysine = [E2 ubiquitin-conjugating enzyme]-L-cysteine + N(6)-ubiquitinyl-[acceptor protein]-L-lysine.</text>
        <dbReference type="EC" id="2.3.2.27"/>
    </reaction>
</comment>
<comment type="pathway">
    <text>Protein modification; protein ubiquitination.</text>
</comment>
<comment type="subcellular location">
    <subcellularLocation>
        <location evidence="5">Membrane</location>
        <topology evidence="5">Single-pass membrane protein</topology>
    </subcellularLocation>
</comment>
<comment type="domain">
    <text evidence="1">The RING-type zinc finger domain mediates binding to an E2 ubiquitin-conjugating enzyme.</text>
</comment>
<comment type="similarity">
    <text evidence="5">Belongs to the RING-type zinc finger family. ATL subfamily.</text>
</comment>